<dbReference type="EMBL" id="AC005169">
    <property type="protein sequence ID" value="AAC62133.1"/>
    <property type="molecule type" value="Genomic_DNA"/>
</dbReference>
<dbReference type="EMBL" id="CP002685">
    <property type="protein sequence ID" value="ANM61252.1"/>
    <property type="molecule type" value="Genomic_DNA"/>
</dbReference>
<dbReference type="EMBL" id="AY045911">
    <property type="protein sequence ID" value="AAK76585.1"/>
    <property type="molecule type" value="mRNA"/>
</dbReference>
<dbReference type="EMBL" id="AY079421">
    <property type="protein sequence ID" value="AAL85152.1"/>
    <property type="molecule type" value="mRNA"/>
</dbReference>
<dbReference type="PIR" id="F84581">
    <property type="entry name" value="F84581"/>
</dbReference>
<dbReference type="RefSeq" id="NP_179573.1">
    <property type="nucleotide sequence ID" value="NM_127541.5"/>
</dbReference>
<dbReference type="SMR" id="O82197"/>
<dbReference type="BioGRID" id="1857">
    <property type="interactions" value="11"/>
</dbReference>
<dbReference type="FunCoup" id="O82197">
    <property type="interactions" value="3801"/>
</dbReference>
<dbReference type="IntAct" id="O82197">
    <property type="interactions" value="6"/>
</dbReference>
<dbReference type="STRING" id="3702.O82197"/>
<dbReference type="TCDB" id="3.A.31.1.2">
    <property type="family name" value="the endosomal sorting complexes required for transport iii (escrt-iii) family"/>
</dbReference>
<dbReference type="MetOSite" id="O82197"/>
<dbReference type="PaxDb" id="3702-AT2G19830.1"/>
<dbReference type="ProteomicsDB" id="242625"/>
<dbReference type="EnsemblPlants" id="AT2G19830.2">
    <property type="protein sequence ID" value="AT2G19830.2"/>
    <property type="gene ID" value="AT2G19830"/>
</dbReference>
<dbReference type="GeneID" id="816502"/>
<dbReference type="Gramene" id="AT2G19830.2">
    <property type="protein sequence ID" value="AT2G19830.2"/>
    <property type="gene ID" value="AT2G19830"/>
</dbReference>
<dbReference type="KEGG" id="ath:AT2G19830"/>
<dbReference type="Araport" id="AT2G19830"/>
<dbReference type="TAIR" id="AT2G19830">
    <property type="gene designation" value="SNF7.2"/>
</dbReference>
<dbReference type="eggNOG" id="KOG1656">
    <property type="taxonomic scope" value="Eukaryota"/>
</dbReference>
<dbReference type="HOGENOM" id="CLU_071097_2_0_1"/>
<dbReference type="InParanoid" id="O82197"/>
<dbReference type="OMA" id="TSKWGNE"/>
<dbReference type="OrthoDB" id="5592979at2759"/>
<dbReference type="PhylomeDB" id="O82197"/>
<dbReference type="PRO" id="PR:O82197"/>
<dbReference type="Proteomes" id="UP000006548">
    <property type="component" value="Chromosome 2"/>
</dbReference>
<dbReference type="ExpressionAtlas" id="O82197">
    <property type="expression patterns" value="baseline and differential"/>
</dbReference>
<dbReference type="GO" id="GO:0000815">
    <property type="term" value="C:ESCRT III complex"/>
    <property type="evidence" value="ECO:0000250"/>
    <property type="project" value="TAIR"/>
</dbReference>
<dbReference type="GO" id="GO:0015031">
    <property type="term" value="P:protein transport"/>
    <property type="evidence" value="ECO:0007669"/>
    <property type="project" value="UniProtKB-KW"/>
</dbReference>
<dbReference type="GO" id="GO:0007034">
    <property type="term" value="P:vacuolar transport"/>
    <property type="evidence" value="ECO:0007669"/>
    <property type="project" value="InterPro"/>
</dbReference>
<dbReference type="GO" id="GO:0016192">
    <property type="term" value="P:vesicle-mediated transport"/>
    <property type="evidence" value="ECO:0007669"/>
    <property type="project" value="UniProtKB-ARBA"/>
</dbReference>
<dbReference type="Gene3D" id="6.10.250.1710">
    <property type="match status" value="1"/>
</dbReference>
<dbReference type="Gene3D" id="1.10.287.1060">
    <property type="entry name" value="ESAT-6-like"/>
    <property type="match status" value="1"/>
</dbReference>
<dbReference type="InterPro" id="IPR005024">
    <property type="entry name" value="Snf7_fam"/>
</dbReference>
<dbReference type="PANTHER" id="PTHR22761">
    <property type="entry name" value="CHARGED MULTIVESICULAR BODY PROTEIN"/>
    <property type="match status" value="1"/>
</dbReference>
<dbReference type="PANTHER" id="PTHR22761:SF10">
    <property type="entry name" value="GH13992P"/>
    <property type="match status" value="1"/>
</dbReference>
<dbReference type="Pfam" id="PF03357">
    <property type="entry name" value="Snf7"/>
    <property type="match status" value="1"/>
</dbReference>
<accession>O82197</accession>
<comment type="function">
    <text evidence="1">Component of the ESCRT-III complex, which is required for multivesicular bodies (MVBs) formation and sorting of endosomal cargo proteins into MVBs. The ESCRT-III complex is probably involved in the concentration of MVB cargo (By similarity).</text>
</comment>
<comment type="subunit">
    <text evidence="2 5 6 7">Component of the endosomal sorting required for transport complex III (ESCRT-III), composed at least of VPS2, VPS20, VPS24 and VPS32 (By similarity). Interacts with SKD1 (PubMed:20663085). Interacts with BRO1/ALIX (PubMed:22639582, PubMed:26342016).</text>
</comment>
<comment type="interaction">
    <interactant intactId="EBI-3865938">
        <id>O82197</id>
    </interactant>
    <interactant intactId="EBI-3865286">
        <id>Q8GXN6</id>
        <label>VPS20.1</label>
    </interactant>
    <organismsDiffer>false</organismsDiffer>
    <experiments>4</experiments>
</comment>
<comment type="interaction">
    <interactant intactId="EBI-3865938">
        <id>O82197</id>
    </interactant>
    <interactant intactId="EBI-3865360">
        <id>Q9FY89</id>
        <label>VPS20.2</label>
    </interactant>
    <organismsDiffer>false</organismsDiffer>
    <experiments>3</experiments>
</comment>
<comment type="interaction">
    <interactant intactId="EBI-3865938">
        <id>O82197</id>
    </interactant>
    <interactant intactId="EBI-3865953">
        <id>Q9SZE4</id>
        <label>VPS32.2</label>
    </interactant>
    <organismsDiffer>false</organismsDiffer>
    <experiments>4</experiments>
</comment>
<comment type="subcellular location">
    <subcellularLocation>
        <location evidence="1">Endosome</location>
    </subcellularLocation>
</comment>
<comment type="similarity">
    <text evidence="9">Belongs to the SNF7 family.</text>
</comment>
<feature type="chain" id="PRO_0000368200" description="Vacuolar protein sorting-associated protein 32 homolog 1">
    <location>
        <begin position="1"/>
        <end position="213"/>
    </location>
</feature>
<feature type="region of interest" description="Disordered" evidence="4">
    <location>
        <begin position="180"/>
        <end position="213"/>
    </location>
</feature>
<feature type="coiled-coil region" evidence="3">
    <location>
        <begin position="11"/>
        <end position="42"/>
    </location>
</feature>
<feature type="coiled-coil region" evidence="3">
    <location>
        <begin position="118"/>
        <end position="176"/>
    </location>
</feature>
<reference key="1">
    <citation type="journal article" date="1999" name="Nature">
        <title>Sequence and analysis of chromosome 2 of the plant Arabidopsis thaliana.</title>
        <authorList>
            <person name="Lin X."/>
            <person name="Kaul S."/>
            <person name="Rounsley S.D."/>
            <person name="Shea T.P."/>
            <person name="Benito M.-I."/>
            <person name="Town C.D."/>
            <person name="Fujii C.Y."/>
            <person name="Mason T.M."/>
            <person name="Bowman C.L."/>
            <person name="Barnstead M.E."/>
            <person name="Feldblyum T.V."/>
            <person name="Buell C.R."/>
            <person name="Ketchum K.A."/>
            <person name="Lee J.J."/>
            <person name="Ronning C.M."/>
            <person name="Koo H.L."/>
            <person name="Moffat K.S."/>
            <person name="Cronin L.A."/>
            <person name="Shen M."/>
            <person name="Pai G."/>
            <person name="Van Aken S."/>
            <person name="Umayam L."/>
            <person name="Tallon L.J."/>
            <person name="Gill J.E."/>
            <person name="Adams M.D."/>
            <person name="Carrera A.J."/>
            <person name="Creasy T.H."/>
            <person name="Goodman H.M."/>
            <person name="Somerville C.R."/>
            <person name="Copenhaver G.P."/>
            <person name="Preuss D."/>
            <person name="Nierman W.C."/>
            <person name="White O."/>
            <person name="Eisen J.A."/>
            <person name="Salzberg S.L."/>
            <person name="Fraser C.M."/>
            <person name="Venter J.C."/>
        </authorList>
    </citation>
    <scope>NUCLEOTIDE SEQUENCE [LARGE SCALE GENOMIC DNA]</scope>
    <source>
        <strain>cv. Columbia</strain>
    </source>
</reference>
<reference key="2">
    <citation type="journal article" date="2017" name="Plant J.">
        <title>Araport11: a complete reannotation of the Arabidopsis thaliana reference genome.</title>
        <authorList>
            <person name="Cheng C.Y."/>
            <person name="Krishnakumar V."/>
            <person name="Chan A.P."/>
            <person name="Thibaud-Nissen F."/>
            <person name="Schobel S."/>
            <person name="Town C.D."/>
        </authorList>
    </citation>
    <scope>GENOME REANNOTATION</scope>
    <source>
        <strain>cv. Columbia</strain>
    </source>
</reference>
<reference key="3">
    <citation type="journal article" date="2003" name="Science">
        <title>Empirical analysis of transcriptional activity in the Arabidopsis genome.</title>
        <authorList>
            <person name="Yamada K."/>
            <person name="Lim J."/>
            <person name="Dale J.M."/>
            <person name="Chen H."/>
            <person name="Shinn P."/>
            <person name="Palm C.J."/>
            <person name="Southwick A.M."/>
            <person name="Wu H.C."/>
            <person name="Kim C.J."/>
            <person name="Nguyen M."/>
            <person name="Pham P.K."/>
            <person name="Cheuk R.F."/>
            <person name="Karlin-Newmann G."/>
            <person name="Liu S.X."/>
            <person name="Lam B."/>
            <person name="Sakano H."/>
            <person name="Wu T."/>
            <person name="Yu G."/>
            <person name="Miranda M."/>
            <person name="Quach H.L."/>
            <person name="Tripp M."/>
            <person name="Chang C.H."/>
            <person name="Lee J.M."/>
            <person name="Toriumi M.J."/>
            <person name="Chan M.M."/>
            <person name="Tang C.C."/>
            <person name="Onodera C.S."/>
            <person name="Deng J.M."/>
            <person name="Akiyama K."/>
            <person name="Ansari Y."/>
            <person name="Arakawa T."/>
            <person name="Banh J."/>
            <person name="Banno F."/>
            <person name="Bowser L."/>
            <person name="Brooks S.Y."/>
            <person name="Carninci P."/>
            <person name="Chao Q."/>
            <person name="Choy N."/>
            <person name="Enju A."/>
            <person name="Goldsmith A.D."/>
            <person name="Gurjal M."/>
            <person name="Hansen N.F."/>
            <person name="Hayashizaki Y."/>
            <person name="Johnson-Hopson C."/>
            <person name="Hsuan V.W."/>
            <person name="Iida K."/>
            <person name="Karnes M."/>
            <person name="Khan S."/>
            <person name="Koesema E."/>
            <person name="Ishida J."/>
            <person name="Jiang P.X."/>
            <person name="Jones T."/>
            <person name="Kawai J."/>
            <person name="Kamiya A."/>
            <person name="Meyers C."/>
            <person name="Nakajima M."/>
            <person name="Narusaka M."/>
            <person name="Seki M."/>
            <person name="Sakurai T."/>
            <person name="Satou M."/>
            <person name="Tamse R."/>
            <person name="Vaysberg M."/>
            <person name="Wallender E.K."/>
            <person name="Wong C."/>
            <person name="Yamamura Y."/>
            <person name="Yuan S."/>
            <person name="Shinozaki K."/>
            <person name="Davis R.W."/>
            <person name="Theologis A."/>
            <person name="Ecker J.R."/>
        </authorList>
    </citation>
    <scope>NUCLEOTIDE SEQUENCE [LARGE SCALE MRNA]</scope>
    <source>
        <strain>cv. Columbia</strain>
    </source>
</reference>
<reference key="4">
    <citation type="journal article" date="2006" name="Development">
        <title>The Arabidopsis elch mutant reveals functions of an ESCRT component in cytokinesis.</title>
        <authorList>
            <person name="Spitzer C."/>
            <person name="Schellmann S."/>
            <person name="Sabovljevic A."/>
            <person name="Shahriari M."/>
            <person name="Keshavaiah C."/>
            <person name="Bechtold N."/>
            <person name="Herzog M."/>
            <person name="Mueller S."/>
            <person name="Hanisch F.-G."/>
            <person name="Huelskamp M."/>
        </authorList>
    </citation>
    <scope>IDENTIFICATION</scope>
    <scope>NOMENCLATURE</scope>
</reference>
<reference key="5">
    <citation type="journal article" date="2006" name="Trends Plant Sci.">
        <title>Exploring the ESCRTing machinery in eukaryotes.</title>
        <authorList>
            <person name="Winter V."/>
            <person name="Hauser M.-T."/>
        </authorList>
    </citation>
    <scope>IDENTIFICATION</scope>
</reference>
<reference key="6">
    <citation type="journal article" date="2010" name="Plant J.">
        <title>The AAA-type ATPase AtSKD1 contributes to vacuolar maintenance of Arabidopsis thaliana.</title>
        <authorList>
            <person name="Shahriari M."/>
            <person name="Keshavaiah C."/>
            <person name="Scheuring D."/>
            <person name="Sabovljevic A."/>
            <person name="Pimpl P."/>
            <person name="Haeusler R.E."/>
            <person name="Huelskamp M."/>
            <person name="Schellmann S."/>
        </authorList>
    </citation>
    <scope>INTERACTION WITH SKD1</scope>
    <source>
        <strain>cv. Columbia</strain>
    </source>
</reference>
<reference key="7">
    <citation type="journal article" date="2011" name="Front. Plant Sci.">
        <title>Protein-protein interaction network and subcellular localization of the Arabidopsis thaliana ESCRT machinery.</title>
        <authorList>
            <person name="Richardson L.G."/>
            <person name="Howard A.S."/>
            <person name="Khuu N."/>
            <person name="Gidda S.K."/>
            <person name="McCartney A."/>
            <person name="Morphy B.J."/>
            <person name="Mullen R.T."/>
        </authorList>
    </citation>
    <scope>NOMENCLATURE</scope>
    <scope>INTERACTION WITH BRO1</scope>
</reference>
<reference key="8">
    <citation type="journal article" date="2015" name="Plant Cell">
        <title>ESCRT-III-associated protein ALIX mediates high-affinity phosphate transporter trafficking to maintain phosphate homeostasis in Arabidopsis.</title>
        <authorList>
            <person name="Cardona-Lopez X."/>
            <person name="Cuyas L."/>
            <person name="Marin E."/>
            <person name="Rajulu C."/>
            <person name="Irigoyen M.L."/>
            <person name="Gil E."/>
            <person name="Puga M.I."/>
            <person name="Bligny R."/>
            <person name="Nussaume L."/>
            <person name="Geldner N."/>
            <person name="Paz-Ares J."/>
            <person name="Rubio V."/>
        </authorList>
    </citation>
    <scope>INTERACTION WITH BRO1</scope>
</reference>
<keyword id="KW-0175">Coiled coil</keyword>
<keyword id="KW-0967">Endosome</keyword>
<keyword id="KW-0653">Protein transport</keyword>
<keyword id="KW-1185">Reference proteome</keyword>
<keyword id="KW-0813">Transport</keyword>
<organism>
    <name type="scientific">Arabidopsis thaliana</name>
    <name type="common">Mouse-ear cress</name>
    <dbReference type="NCBI Taxonomy" id="3702"/>
    <lineage>
        <taxon>Eukaryota</taxon>
        <taxon>Viridiplantae</taxon>
        <taxon>Streptophyta</taxon>
        <taxon>Embryophyta</taxon>
        <taxon>Tracheophyta</taxon>
        <taxon>Spermatophyta</taxon>
        <taxon>Magnoliopsida</taxon>
        <taxon>eudicotyledons</taxon>
        <taxon>Gunneridae</taxon>
        <taxon>Pentapetalae</taxon>
        <taxon>rosids</taxon>
        <taxon>malvids</taxon>
        <taxon>Brassicales</taxon>
        <taxon>Brassicaceae</taxon>
        <taxon>Camelineae</taxon>
        <taxon>Arabidopsis</taxon>
    </lineage>
</organism>
<name>VP321_ARATH</name>
<protein>
    <recommendedName>
        <fullName>Vacuolar protein sorting-associated protein 32 homolog 1</fullName>
        <shortName>AtVPS32-1</shortName>
    </recommendedName>
    <alternativeName>
        <fullName>Charged multivesicular body protein 4 homolog 1</fullName>
    </alternativeName>
    <alternativeName>
        <fullName>ESCRT-III complex subunit VPS32 homolog 1</fullName>
    </alternativeName>
</protein>
<evidence type="ECO:0000250" key="1"/>
<evidence type="ECO:0000250" key="2">
    <source>
        <dbReference type="UniProtKB" id="Q9H444"/>
    </source>
</evidence>
<evidence type="ECO:0000255" key="3"/>
<evidence type="ECO:0000256" key="4">
    <source>
        <dbReference type="SAM" id="MobiDB-lite"/>
    </source>
</evidence>
<evidence type="ECO:0000269" key="5">
    <source>
    </source>
</evidence>
<evidence type="ECO:0000269" key="6">
    <source>
    </source>
</evidence>
<evidence type="ECO:0000269" key="7">
    <source>
    </source>
</evidence>
<evidence type="ECO:0000303" key="8">
    <source>
    </source>
</evidence>
<evidence type="ECO:0000305" key="9"/>
<proteinExistence type="evidence at protein level"/>
<sequence length="213" mass="24014">MFMNRLFGKPKQETSTLQTLDKLNETLEMLEKKENVLLKKATGEVEKAKEFSRAKNKRAAIQCLKRKRLYEQQVEQLGNFQLRIHDQMIMLEGAKATTETVDALRTGASAMKAMQKATNIDDVDKTMDEINEQTENMKQIQEALSAPFGANDFDEDELEAELDELEGAELEEQLLQPVPIHVPQGNKPARAPAQKQPTAEEDELAALQAEMAL</sequence>
<gene>
    <name type="primary">VPS32.1</name>
    <name type="synonym">CHMP4-1</name>
    <name evidence="8" type="synonym">SNF7A</name>
    <name type="ordered locus">At2g19830</name>
    <name type="ORF">F6F22.14</name>
</gene>